<protein>
    <recommendedName>
        <fullName evidence="1">N-acetylmannosamine kinase</fullName>
        <ecNumber evidence="1">2.7.1.60</ecNumber>
    </recommendedName>
    <alternativeName>
        <fullName evidence="1">ManNAc kinase</fullName>
    </alternativeName>
    <alternativeName>
        <fullName evidence="1">N-acetyl-D-mannosamine kinase</fullName>
    </alternativeName>
</protein>
<name>NANK_ECO24</name>
<accession>A7ZSB5</accession>
<gene>
    <name evidence="1" type="primary">nanK</name>
    <name type="ordered locus">EcE24377A_3704</name>
</gene>
<dbReference type="EC" id="2.7.1.60" evidence="1"/>
<dbReference type="EMBL" id="CP000800">
    <property type="protein sequence ID" value="ABV17047.1"/>
    <property type="molecule type" value="Genomic_DNA"/>
</dbReference>
<dbReference type="RefSeq" id="WP_000209003.1">
    <property type="nucleotide sequence ID" value="NC_009801.1"/>
</dbReference>
<dbReference type="SMR" id="A7ZSB5"/>
<dbReference type="GeneID" id="75206072"/>
<dbReference type="KEGG" id="ecw:EcE24377A_3704"/>
<dbReference type="HOGENOM" id="CLU_036604_0_4_6"/>
<dbReference type="UniPathway" id="UPA00629">
    <property type="reaction ID" value="UER00681"/>
</dbReference>
<dbReference type="Proteomes" id="UP000001122">
    <property type="component" value="Chromosome"/>
</dbReference>
<dbReference type="GO" id="GO:0005524">
    <property type="term" value="F:ATP binding"/>
    <property type="evidence" value="ECO:0007669"/>
    <property type="project" value="UniProtKB-UniRule"/>
</dbReference>
<dbReference type="GO" id="GO:0009384">
    <property type="term" value="F:N-acylmannosamine kinase activity"/>
    <property type="evidence" value="ECO:0007669"/>
    <property type="project" value="UniProtKB-UniRule"/>
</dbReference>
<dbReference type="GO" id="GO:0008270">
    <property type="term" value="F:zinc ion binding"/>
    <property type="evidence" value="ECO:0007669"/>
    <property type="project" value="UniProtKB-UniRule"/>
</dbReference>
<dbReference type="GO" id="GO:0019262">
    <property type="term" value="P:N-acetylneuraminate catabolic process"/>
    <property type="evidence" value="ECO:0007669"/>
    <property type="project" value="UniProtKB-UniRule"/>
</dbReference>
<dbReference type="CDD" id="cd24069">
    <property type="entry name" value="ASKHA_NBD_ROK_EcNanK-like"/>
    <property type="match status" value="1"/>
</dbReference>
<dbReference type="FunFam" id="3.30.420.40:FF:000062">
    <property type="entry name" value="N-acetylmannosamine kinase"/>
    <property type="match status" value="1"/>
</dbReference>
<dbReference type="FunFam" id="3.30.420.40:FF:000063">
    <property type="entry name" value="N-acetylmannosamine kinase"/>
    <property type="match status" value="1"/>
</dbReference>
<dbReference type="Gene3D" id="3.30.420.40">
    <property type="match status" value="2"/>
</dbReference>
<dbReference type="HAMAP" id="MF_01234">
    <property type="entry name" value="ManNAc_kinase"/>
    <property type="match status" value="1"/>
</dbReference>
<dbReference type="InterPro" id="IPR043129">
    <property type="entry name" value="ATPase_NBD"/>
</dbReference>
<dbReference type="InterPro" id="IPR023945">
    <property type="entry name" value="ManNAc_kinase_bac"/>
</dbReference>
<dbReference type="InterPro" id="IPR000600">
    <property type="entry name" value="ROK"/>
</dbReference>
<dbReference type="InterPro" id="IPR049874">
    <property type="entry name" value="ROK_cs"/>
</dbReference>
<dbReference type="NCBIfam" id="NF047821">
    <property type="entry name" value="NactlManKinNanK"/>
    <property type="match status" value="1"/>
</dbReference>
<dbReference type="NCBIfam" id="NF003461">
    <property type="entry name" value="PRK05082.1"/>
    <property type="match status" value="1"/>
</dbReference>
<dbReference type="PANTHER" id="PTHR18964:SF169">
    <property type="entry name" value="N-ACETYLMANNOSAMINE KINASE"/>
    <property type="match status" value="1"/>
</dbReference>
<dbReference type="PANTHER" id="PTHR18964">
    <property type="entry name" value="ROK (REPRESSOR, ORF, KINASE) FAMILY"/>
    <property type="match status" value="1"/>
</dbReference>
<dbReference type="Pfam" id="PF00480">
    <property type="entry name" value="ROK"/>
    <property type="match status" value="1"/>
</dbReference>
<dbReference type="SUPFAM" id="SSF53067">
    <property type="entry name" value="Actin-like ATPase domain"/>
    <property type="match status" value="1"/>
</dbReference>
<dbReference type="PROSITE" id="PS01125">
    <property type="entry name" value="ROK"/>
    <property type="match status" value="1"/>
</dbReference>
<sequence length="291" mass="29657">MTTLAIDIGGTKLAAALIGADGQIRDRRELPTPASQTPEALRDALSALVSPLQAHAQRVAIASTGIIRDGSLLALNPHNLGGLLHFPLVKTLEQLTDLPTIAINDAQAAAWAEYQALEGDVTEMVFITVSTGVGGGVVSGGKLLTGPGGLAGHIGHTLADPHGPVCGCGRTGCVEAIASGRGIAAAAQGELAGADARTIFTRAGQGDEQAQQLIHRSARTLARLIADIKATTDCQCVVVGGSVGLAEGYLALVETYLAQEPAAFHVDLLAAHYRHDAGLLGAALLAQGEKL</sequence>
<evidence type="ECO:0000255" key="1">
    <source>
        <dbReference type="HAMAP-Rule" id="MF_01234"/>
    </source>
</evidence>
<proteinExistence type="inferred from homology"/>
<keyword id="KW-0067">ATP-binding</keyword>
<keyword id="KW-0119">Carbohydrate metabolism</keyword>
<keyword id="KW-0418">Kinase</keyword>
<keyword id="KW-0479">Metal-binding</keyword>
<keyword id="KW-0547">Nucleotide-binding</keyword>
<keyword id="KW-1185">Reference proteome</keyword>
<keyword id="KW-0808">Transferase</keyword>
<keyword id="KW-0862">Zinc</keyword>
<organism>
    <name type="scientific">Escherichia coli O139:H28 (strain E24377A / ETEC)</name>
    <dbReference type="NCBI Taxonomy" id="331111"/>
    <lineage>
        <taxon>Bacteria</taxon>
        <taxon>Pseudomonadati</taxon>
        <taxon>Pseudomonadota</taxon>
        <taxon>Gammaproteobacteria</taxon>
        <taxon>Enterobacterales</taxon>
        <taxon>Enterobacteriaceae</taxon>
        <taxon>Escherichia</taxon>
    </lineage>
</organism>
<comment type="function">
    <text evidence="1">Catalyzes the phosphorylation of N-acetylmannosamine (ManNAc) to ManNAc-6-P.</text>
</comment>
<comment type="catalytic activity">
    <reaction evidence="1">
        <text>an N-acyl-D-mannosamine + ATP = an N-acyl-D-mannosamine 6-phosphate + ADP + H(+)</text>
        <dbReference type="Rhea" id="RHEA:23832"/>
        <dbReference type="ChEBI" id="CHEBI:15378"/>
        <dbReference type="ChEBI" id="CHEBI:16062"/>
        <dbReference type="ChEBI" id="CHEBI:30616"/>
        <dbReference type="ChEBI" id="CHEBI:57666"/>
        <dbReference type="ChEBI" id="CHEBI:456216"/>
        <dbReference type="EC" id="2.7.1.60"/>
    </reaction>
</comment>
<comment type="pathway">
    <text evidence="1">Amino-sugar metabolism; N-acetylneuraminate degradation; D-fructose 6-phosphate from N-acetylneuraminate: step 2/5.</text>
</comment>
<comment type="subunit">
    <text evidence="1">Homodimer.</text>
</comment>
<comment type="similarity">
    <text evidence="1">Belongs to the ROK (NagC/XylR) family. NanK subfamily.</text>
</comment>
<feature type="chain" id="PRO_1000066908" description="N-acetylmannosamine kinase">
    <location>
        <begin position="1"/>
        <end position="291"/>
    </location>
</feature>
<feature type="binding site" evidence="1">
    <location>
        <begin position="5"/>
        <end position="12"/>
    </location>
    <ligand>
        <name>ATP</name>
        <dbReference type="ChEBI" id="CHEBI:30616"/>
    </ligand>
</feature>
<feature type="binding site" evidence="1">
    <location>
        <begin position="132"/>
        <end position="139"/>
    </location>
    <ligand>
        <name>ATP</name>
        <dbReference type="ChEBI" id="CHEBI:30616"/>
    </ligand>
</feature>
<feature type="binding site" evidence="1">
    <location>
        <position position="156"/>
    </location>
    <ligand>
        <name>Zn(2+)</name>
        <dbReference type="ChEBI" id="CHEBI:29105"/>
    </ligand>
</feature>
<feature type="binding site" evidence="1">
    <location>
        <position position="166"/>
    </location>
    <ligand>
        <name>Zn(2+)</name>
        <dbReference type="ChEBI" id="CHEBI:29105"/>
    </ligand>
</feature>
<feature type="binding site" evidence="1">
    <location>
        <position position="168"/>
    </location>
    <ligand>
        <name>Zn(2+)</name>
        <dbReference type="ChEBI" id="CHEBI:29105"/>
    </ligand>
</feature>
<feature type="binding site" evidence="1">
    <location>
        <position position="173"/>
    </location>
    <ligand>
        <name>Zn(2+)</name>
        <dbReference type="ChEBI" id="CHEBI:29105"/>
    </ligand>
</feature>
<reference key="1">
    <citation type="journal article" date="2008" name="J. Bacteriol.">
        <title>The pangenome structure of Escherichia coli: comparative genomic analysis of E. coli commensal and pathogenic isolates.</title>
        <authorList>
            <person name="Rasko D.A."/>
            <person name="Rosovitz M.J."/>
            <person name="Myers G.S.A."/>
            <person name="Mongodin E.F."/>
            <person name="Fricke W.F."/>
            <person name="Gajer P."/>
            <person name="Crabtree J."/>
            <person name="Sebaihia M."/>
            <person name="Thomson N.R."/>
            <person name="Chaudhuri R."/>
            <person name="Henderson I.R."/>
            <person name="Sperandio V."/>
            <person name="Ravel J."/>
        </authorList>
    </citation>
    <scope>NUCLEOTIDE SEQUENCE [LARGE SCALE GENOMIC DNA]</scope>
    <source>
        <strain>E24377A / ETEC</strain>
    </source>
</reference>